<comment type="function">
    <text evidence="1">Oxidative deamination of D-amino acids.</text>
</comment>
<comment type="catalytic activity">
    <reaction evidence="1">
        <text>a D-alpha-amino acid + A + H2O = a 2-oxocarboxylate + AH2 + NH4(+)</text>
        <dbReference type="Rhea" id="RHEA:18125"/>
        <dbReference type="ChEBI" id="CHEBI:13193"/>
        <dbReference type="ChEBI" id="CHEBI:15377"/>
        <dbReference type="ChEBI" id="CHEBI:17499"/>
        <dbReference type="ChEBI" id="CHEBI:28938"/>
        <dbReference type="ChEBI" id="CHEBI:35179"/>
        <dbReference type="ChEBI" id="CHEBI:59871"/>
    </reaction>
</comment>
<comment type="cofactor">
    <cofactor evidence="1">
        <name>FAD</name>
        <dbReference type="ChEBI" id="CHEBI:57692"/>
    </cofactor>
</comment>
<comment type="pathway">
    <text>Amino-acid degradation; D-alanine degradation; NH(3) and pyruvate from D-alanine: step 1/1.</text>
</comment>
<comment type="similarity">
    <text evidence="1">Belongs to the DadA oxidoreductase family.</text>
</comment>
<gene>
    <name evidence="1" type="primary">dadA</name>
    <name type="ordered locus">PMI1509</name>
</gene>
<accession>B4EXU2</accession>
<proteinExistence type="inferred from homology"/>
<dbReference type="EC" id="1.4.99.-" evidence="1"/>
<dbReference type="EMBL" id="AM942759">
    <property type="protein sequence ID" value="CAR43171.1"/>
    <property type="molecule type" value="Genomic_DNA"/>
</dbReference>
<dbReference type="RefSeq" id="WP_004243273.1">
    <property type="nucleotide sequence ID" value="NC_010554.1"/>
</dbReference>
<dbReference type="SMR" id="B4EXU2"/>
<dbReference type="EnsemblBacteria" id="CAR43171">
    <property type="protein sequence ID" value="CAR43171"/>
    <property type="gene ID" value="PMI1509"/>
</dbReference>
<dbReference type="GeneID" id="6801033"/>
<dbReference type="KEGG" id="pmr:PMI1509"/>
<dbReference type="eggNOG" id="COG0665">
    <property type="taxonomic scope" value="Bacteria"/>
</dbReference>
<dbReference type="HOGENOM" id="CLU_007884_9_2_6"/>
<dbReference type="UniPathway" id="UPA00043">
    <property type="reaction ID" value="UER00498"/>
</dbReference>
<dbReference type="Proteomes" id="UP000008319">
    <property type="component" value="Chromosome"/>
</dbReference>
<dbReference type="GO" id="GO:0005737">
    <property type="term" value="C:cytoplasm"/>
    <property type="evidence" value="ECO:0007669"/>
    <property type="project" value="TreeGrafter"/>
</dbReference>
<dbReference type="GO" id="GO:0005886">
    <property type="term" value="C:plasma membrane"/>
    <property type="evidence" value="ECO:0007669"/>
    <property type="project" value="TreeGrafter"/>
</dbReference>
<dbReference type="GO" id="GO:0008718">
    <property type="term" value="F:D-amino-acid dehydrogenase activity"/>
    <property type="evidence" value="ECO:0007669"/>
    <property type="project" value="UniProtKB-UniRule"/>
</dbReference>
<dbReference type="GO" id="GO:0055130">
    <property type="term" value="P:D-alanine catabolic process"/>
    <property type="evidence" value="ECO:0007669"/>
    <property type="project" value="UniProtKB-UniPathway"/>
</dbReference>
<dbReference type="FunFam" id="3.50.50.60:FF:000020">
    <property type="entry name" value="D-amino acid dehydrogenase"/>
    <property type="match status" value="1"/>
</dbReference>
<dbReference type="Gene3D" id="3.30.9.10">
    <property type="entry name" value="D-Amino Acid Oxidase, subunit A, domain 2"/>
    <property type="match status" value="1"/>
</dbReference>
<dbReference type="Gene3D" id="3.50.50.60">
    <property type="entry name" value="FAD/NAD(P)-binding domain"/>
    <property type="match status" value="2"/>
</dbReference>
<dbReference type="HAMAP" id="MF_01202">
    <property type="entry name" value="DadA"/>
    <property type="match status" value="1"/>
</dbReference>
<dbReference type="InterPro" id="IPR023080">
    <property type="entry name" value="DadA"/>
</dbReference>
<dbReference type="InterPro" id="IPR006076">
    <property type="entry name" value="FAD-dep_OxRdtase"/>
</dbReference>
<dbReference type="InterPro" id="IPR036188">
    <property type="entry name" value="FAD/NAD-bd_sf"/>
</dbReference>
<dbReference type="NCBIfam" id="NF001933">
    <property type="entry name" value="PRK00711.1"/>
    <property type="match status" value="1"/>
</dbReference>
<dbReference type="PANTHER" id="PTHR13847:SF280">
    <property type="entry name" value="D-AMINO ACID DEHYDROGENASE"/>
    <property type="match status" value="1"/>
</dbReference>
<dbReference type="PANTHER" id="PTHR13847">
    <property type="entry name" value="SARCOSINE DEHYDROGENASE-RELATED"/>
    <property type="match status" value="1"/>
</dbReference>
<dbReference type="Pfam" id="PF01266">
    <property type="entry name" value="DAO"/>
    <property type="match status" value="1"/>
</dbReference>
<dbReference type="SUPFAM" id="SSF54373">
    <property type="entry name" value="FAD-linked reductases, C-terminal domain"/>
    <property type="match status" value="1"/>
</dbReference>
<dbReference type="SUPFAM" id="SSF51905">
    <property type="entry name" value="FAD/NAD(P)-binding domain"/>
    <property type="match status" value="1"/>
</dbReference>
<organism>
    <name type="scientific">Proteus mirabilis (strain HI4320)</name>
    <dbReference type="NCBI Taxonomy" id="529507"/>
    <lineage>
        <taxon>Bacteria</taxon>
        <taxon>Pseudomonadati</taxon>
        <taxon>Pseudomonadota</taxon>
        <taxon>Gammaproteobacteria</taxon>
        <taxon>Enterobacterales</taxon>
        <taxon>Morganellaceae</taxon>
        <taxon>Proteus</taxon>
    </lineage>
</organism>
<evidence type="ECO:0000255" key="1">
    <source>
        <dbReference type="HAMAP-Rule" id="MF_01202"/>
    </source>
</evidence>
<feature type="chain" id="PRO_1000138661" description="D-amino acid dehydrogenase">
    <location>
        <begin position="1"/>
        <end position="434"/>
    </location>
</feature>
<feature type="binding site" evidence="1">
    <location>
        <begin position="3"/>
        <end position="17"/>
    </location>
    <ligand>
        <name>FAD</name>
        <dbReference type="ChEBI" id="CHEBI:57692"/>
    </ligand>
</feature>
<sequence>MKVIILGGGVIGVTSAWYLVQQGHEVIVVDRQSSAAEETSAGNAGQISPGYATPWGAPGIPLKAVKWMFQKHAPLAIRPDGSLFQLRWMWQMLRNCDASHYAMNKSRMVRIAEYSRDCIRQLRQDTGIEYEGRQGGTLQLFRDQKQFDNAANDIAVLKQEGVAYELLTAEQLKSAEPALEHVSHKLTGGLRLPNDETGDCQIFTKKLAKMAEEAGVTFLFNKEIKHLLFDGDKVTGVQCHDGLLTADHYVVAMGSYSTEFLKNKITIPVYPLKGYSLTMPIIDASRAPTSTILDETYKIAVTRFDNRIRVGGMAEVVGFNLNILKSRCETLKMVVQDLYEGGGDISKATFWTGLRPMTPDGTPIVGPTAYRNLSLNTGHGTLGWTMACGSGQLLADLISGNKTAIAADDLSVFRYIDGFNTKLLRPGQKLDAVY</sequence>
<reference key="1">
    <citation type="journal article" date="2008" name="J. Bacteriol.">
        <title>Complete genome sequence of uropathogenic Proteus mirabilis, a master of both adherence and motility.</title>
        <authorList>
            <person name="Pearson M.M."/>
            <person name="Sebaihia M."/>
            <person name="Churcher C."/>
            <person name="Quail M.A."/>
            <person name="Seshasayee A.S."/>
            <person name="Luscombe N.M."/>
            <person name="Abdellah Z."/>
            <person name="Arrosmith C."/>
            <person name="Atkin B."/>
            <person name="Chillingworth T."/>
            <person name="Hauser H."/>
            <person name="Jagels K."/>
            <person name="Moule S."/>
            <person name="Mungall K."/>
            <person name="Norbertczak H."/>
            <person name="Rabbinowitsch E."/>
            <person name="Walker D."/>
            <person name="Whithead S."/>
            <person name="Thomson N.R."/>
            <person name="Rather P.N."/>
            <person name="Parkhill J."/>
            <person name="Mobley H.L.T."/>
        </authorList>
    </citation>
    <scope>NUCLEOTIDE SEQUENCE [LARGE SCALE GENOMIC DNA]</scope>
    <source>
        <strain>HI4320</strain>
    </source>
</reference>
<protein>
    <recommendedName>
        <fullName evidence="1">D-amino acid dehydrogenase</fullName>
        <ecNumber evidence="1">1.4.99.-</ecNumber>
    </recommendedName>
</protein>
<keyword id="KW-0274">FAD</keyword>
<keyword id="KW-0285">Flavoprotein</keyword>
<keyword id="KW-0560">Oxidoreductase</keyword>
<keyword id="KW-1185">Reference proteome</keyword>
<name>DADA_PROMH</name>